<sequence>MASDTPGFYVDKLNKYSQIHKVKIIYKEISVTGPPHDRRFTFQVIIEEREFPEGEGRSKQEAKNNAAKLAVEILDNENKVDSHTDASEQGLIEGNYIGLVNSFAQKENLPVNFELCDPDSQLPHRFICKCKIGQTTYGTGFGANKKEAKQLAAKNAYQKLSEKSPSKTGFVTSLSSDFSSSSSITSNSASQSASGRDFEDIFMNGLREKRKSGVKVPSDDVLRNKYTLDDRFSKDFEDIEEIGSGGFGQVFKAKHRIDGKTYAIKRITYNTKKAKREVQALAELNHANIVQYRVCWEGEDYDYDPENSTNGDTSRYKTRCLFIQMEFCDKGTLQQWLEKRNRSQEDKALVLELFEQIVTGVDYIHSKGLIHRDLKPGNIFLVDEKHIKIGDFGLATALENDGNPRTKYTGTPQYMSPEQKSSLVEYGKEVDIFALGLILAELLHICKTDSEKIEFFQLLRNGIFSDDIFDNKEKSLLQKLLSSKPRERPNTSEILKTLAEWKNISEKKKRNTC</sequence>
<gene>
    <name type="primary">Eif2ak2</name>
    <name type="synonym">Prkr</name>
</gene>
<dbReference type="EC" id="2.7.11.1"/>
<dbReference type="EC" id="2.7.10.2"/>
<dbReference type="EMBL" id="L29281">
    <property type="protein sequence ID" value="AAA61926.1"/>
    <property type="molecule type" value="mRNA"/>
</dbReference>
<dbReference type="PIR" id="S50216">
    <property type="entry name" value="S50216"/>
</dbReference>
<dbReference type="RefSeq" id="NP_062208.1">
    <property type="nucleotide sequence ID" value="NM_019335.1"/>
</dbReference>
<dbReference type="SMR" id="Q63184"/>
<dbReference type="BioGRID" id="248507">
    <property type="interactions" value="3"/>
</dbReference>
<dbReference type="FunCoup" id="Q63184">
    <property type="interactions" value="665"/>
</dbReference>
<dbReference type="STRING" id="10116.ENSRNOP00000071646"/>
<dbReference type="PhosphoSitePlus" id="Q63184"/>
<dbReference type="jPOST" id="Q63184"/>
<dbReference type="PaxDb" id="10116-ENSRNOP00000067694"/>
<dbReference type="GeneID" id="54287"/>
<dbReference type="KEGG" id="rno:54287"/>
<dbReference type="AGR" id="RGD:3402"/>
<dbReference type="CTD" id="5610"/>
<dbReference type="RGD" id="3402">
    <property type="gene designation" value="Eif2ak2"/>
</dbReference>
<dbReference type="eggNOG" id="KOG1033">
    <property type="taxonomic scope" value="Eukaryota"/>
</dbReference>
<dbReference type="InParanoid" id="Q63184"/>
<dbReference type="OrthoDB" id="6513976at2759"/>
<dbReference type="PhylomeDB" id="Q63184"/>
<dbReference type="Reactome" id="R-RNO-1169408">
    <property type="pathway name" value="ISG15 antiviral mechanism"/>
</dbReference>
<dbReference type="Reactome" id="R-RNO-9833482">
    <property type="pathway name" value="PKR-mediated signaling"/>
</dbReference>
<dbReference type="PRO" id="PR:Q63184"/>
<dbReference type="Proteomes" id="UP000002494">
    <property type="component" value="Unplaced"/>
</dbReference>
<dbReference type="GO" id="GO:0005737">
    <property type="term" value="C:cytoplasm"/>
    <property type="evidence" value="ECO:0000250"/>
    <property type="project" value="UniProtKB"/>
</dbReference>
<dbReference type="GO" id="GO:0005634">
    <property type="term" value="C:nucleus"/>
    <property type="evidence" value="ECO:0000318"/>
    <property type="project" value="GO_Central"/>
</dbReference>
<dbReference type="GO" id="GO:0048471">
    <property type="term" value="C:perinuclear region of cytoplasm"/>
    <property type="evidence" value="ECO:0000250"/>
    <property type="project" value="UniProtKB"/>
</dbReference>
<dbReference type="GO" id="GO:0005524">
    <property type="term" value="F:ATP binding"/>
    <property type="evidence" value="ECO:0007669"/>
    <property type="project" value="UniProtKB-KW"/>
</dbReference>
<dbReference type="GO" id="GO:0003725">
    <property type="term" value="F:double-stranded RNA binding"/>
    <property type="evidence" value="ECO:0000266"/>
    <property type="project" value="RGD"/>
</dbReference>
<dbReference type="GO" id="GO:0004694">
    <property type="term" value="F:eukaryotic translation initiation factor 2alpha kinase activity"/>
    <property type="evidence" value="ECO:0000266"/>
    <property type="project" value="RGD"/>
</dbReference>
<dbReference type="GO" id="GO:0042802">
    <property type="term" value="F:identical protein binding"/>
    <property type="evidence" value="ECO:0000266"/>
    <property type="project" value="RGD"/>
</dbReference>
<dbReference type="GO" id="GO:0016301">
    <property type="term" value="F:kinase activity"/>
    <property type="evidence" value="ECO:0000266"/>
    <property type="project" value="RGD"/>
</dbReference>
<dbReference type="GO" id="GO:0004715">
    <property type="term" value="F:non-membrane spanning protein tyrosine kinase activity"/>
    <property type="evidence" value="ECO:0007669"/>
    <property type="project" value="UniProtKB-EC"/>
</dbReference>
<dbReference type="GO" id="GO:0004672">
    <property type="term" value="F:protein kinase activity"/>
    <property type="evidence" value="ECO:0000250"/>
    <property type="project" value="UniProtKB"/>
</dbReference>
<dbReference type="GO" id="GO:0106310">
    <property type="term" value="F:protein serine kinase activity"/>
    <property type="evidence" value="ECO:0007669"/>
    <property type="project" value="RHEA"/>
</dbReference>
<dbReference type="GO" id="GO:0140374">
    <property type="term" value="P:antiviral innate immune response"/>
    <property type="evidence" value="ECO:0000266"/>
    <property type="project" value="RGD"/>
</dbReference>
<dbReference type="GO" id="GO:0034198">
    <property type="term" value="P:cellular response to amino acid starvation"/>
    <property type="evidence" value="ECO:0000266"/>
    <property type="project" value="RGD"/>
</dbReference>
<dbReference type="GO" id="GO:0030968">
    <property type="term" value="P:endoplasmic reticulum unfolded protein response"/>
    <property type="evidence" value="ECO:0000266"/>
    <property type="project" value="RGD"/>
</dbReference>
<dbReference type="GO" id="GO:0043066">
    <property type="term" value="P:negative regulation of apoptotic process"/>
    <property type="evidence" value="ECO:0000266"/>
    <property type="project" value="RGD"/>
</dbReference>
<dbReference type="GO" id="GO:0033689">
    <property type="term" value="P:negative regulation of osteoblast proliferation"/>
    <property type="evidence" value="ECO:0000250"/>
    <property type="project" value="UniProtKB"/>
</dbReference>
<dbReference type="GO" id="GO:0017148">
    <property type="term" value="P:negative regulation of translation"/>
    <property type="evidence" value="ECO:0000250"/>
    <property type="project" value="UniProtKB"/>
</dbReference>
<dbReference type="GO" id="GO:0045071">
    <property type="term" value="P:negative regulation of viral genome replication"/>
    <property type="evidence" value="ECO:0000250"/>
    <property type="project" value="UniProtKB"/>
</dbReference>
<dbReference type="GO" id="GO:0043065">
    <property type="term" value="P:positive regulation of apoptotic process"/>
    <property type="evidence" value="ECO:0000315"/>
    <property type="project" value="RGD"/>
</dbReference>
<dbReference type="GO" id="GO:0032722">
    <property type="term" value="P:positive regulation of chemokine production"/>
    <property type="evidence" value="ECO:0000250"/>
    <property type="project" value="UniProtKB"/>
</dbReference>
<dbReference type="GO" id="GO:0001819">
    <property type="term" value="P:positive regulation of cytokine production"/>
    <property type="evidence" value="ECO:0000250"/>
    <property type="project" value="UniProtKB"/>
</dbReference>
<dbReference type="GO" id="GO:0043410">
    <property type="term" value="P:positive regulation of MAPK cascade"/>
    <property type="evidence" value="ECO:0000250"/>
    <property type="project" value="UniProtKB"/>
</dbReference>
<dbReference type="GO" id="GO:0051092">
    <property type="term" value="P:positive regulation of NF-kappaB transcription factor activity"/>
    <property type="evidence" value="ECO:0000250"/>
    <property type="project" value="UniProtKB"/>
</dbReference>
<dbReference type="GO" id="GO:1901224">
    <property type="term" value="P:positive regulation of non-canonical NF-kappaB signal transduction"/>
    <property type="evidence" value="ECO:0000250"/>
    <property type="project" value="UniProtKB"/>
</dbReference>
<dbReference type="GO" id="GO:0032874">
    <property type="term" value="P:positive regulation of stress-activated MAPK cascade"/>
    <property type="evidence" value="ECO:0000250"/>
    <property type="project" value="UniProtKB"/>
</dbReference>
<dbReference type="GO" id="GO:0046777">
    <property type="term" value="P:protein autophosphorylation"/>
    <property type="evidence" value="ECO:0000250"/>
    <property type="project" value="UniProtKB"/>
</dbReference>
<dbReference type="GO" id="GO:0006468">
    <property type="term" value="P:protein phosphorylation"/>
    <property type="evidence" value="ECO:0000250"/>
    <property type="project" value="UniProtKB"/>
</dbReference>
<dbReference type="GO" id="GO:1901532">
    <property type="term" value="P:regulation of hematopoietic progenitor cell differentiation"/>
    <property type="evidence" value="ECO:0000250"/>
    <property type="project" value="UniProtKB"/>
</dbReference>
<dbReference type="GO" id="GO:1902036">
    <property type="term" value="P:regulation of hematopoietic stem cell differentiation"/>
    <property type="evidence" value="ECO:0000250"/>
    <property type="project" value="UniProtKB"/>
</dbReference>
<dbReference type="GO" id="GO:1902033">
    <property type="term" value="P:regulation of hematopoietic stem cell proliferation"/>
    <property type="evidence" value="ECO:0000250"/>
    <property type="project" value="UniProtKB"/>
</dbReference>
<dbReference type="GO" id="GO:1900225">
    <property type="term" value="P:regulation of NLRP3 inflammasome complex assembly"/>
    <property type="evidence" value="ECO:0000250"/>
    <property type="project" value="UniProtKB"/>
</dbReference>
<dbReference type="GO" id="GO:0006446">
    <property type="term" value="P:regulation of translational initiation"/>
    <property type="evidence" value="ECO:0000318"/>
    <property type="project" value="GO_Central"/>
</dbReference>
<dbReference type="GO" id="GO:0043330">
    <property type="term" value="P:response to exogenous dsRNA"/>
    <property type="evidence" value="ECO:0000270"/>
    <property type="project" value="RGD"/>
</dbReference>
<dbReference type="GO" id="GO:0035455">
    <property type="term" value="P:response to interferon-alpha"/>
    <property type="evidence" value="ECO:0000250"/>
    <property type="project" value="UniProtKB"/>
</dbReference>
<dbReference type="GO" id="GO:0032496">
    <property type="term" value="P:response to lipopolysaccharide"/>
    <property type="evidence" value="ECO:0000315"/>
    <property type="project" value="RGD"/>
</dbReference>
<dbReference type="GO" id="GO:0009612">
    <property type="term" value="P:response to mechanical stimulus"/>
    <property type="evidence" value="ECO:0000270"/>
    <property type="project" value="RGD"/>
</dbReference>
<dbReference type="GO" id="GO:0009636">
    <property type="term" value="P:response to toxic substance"/>
    <property type="evidence" value="ECO:0000315"/>
    <property type="project" value="RGD"/>
</dbReference>
<dbReference type="GO" id="GO:0009615">
    <property type="term" value="P:response to virus"/>
    <property type="evidence" value="ECO:0000250"/>
    <property type="project" value="UniProtKB"/>
</dbReference>
<dbReference type="GO" id="GO:0033197">
    <property type="term" value="P:response to vitamin E"/>
    <property type="evidence" value="ECO:0000353"/>
    <property type="project" value="RGD"/>
</dbReference>
<dbReference type="GO" id="GO:0006412">
    <property type="term" value="P:translation"/>
    <property type="evidence" value="ECO:0000266"/>
    <property type="project" value="RGD"/>
</dbReference>
<dbReference type="CDD" id="cd19903">
    <property type="entry name" value="DSRM_EIF2AK2_rpt1"/>
    <property type="match status" value="1"/>
</dbReference>
<dbReference type="CDD" id="cd19904">
    <property type="entry name" value="DSRM_EIF2AK2_rpt2"/>
    <property type="match status" value="1"/>
</dbReference>
<dbReference type="FunFam" id="3.30.160.20:FF:000045">
    <property type="entry name" value="Eukaryotic translation initiation factor 2-alpha kinase 2"/>
    <property type="match status" value="1"/>
</dbReference>
<dbReference type="FunFam" id="3.30.200.20:FF:000536">
    <property type="entry name" value="Eukaryotic translation initiation factor 2-alpha kinase 2"/>
    <property type="match status" value="1"/>
</dbReference>
<dbReference type="FunFam" id="1.10.510.10:FF:000251">
    <property type="entry name" value="eukaryotic translation initiation factor 2-alpha kinase 3"/>
    <property type="match status" value="1"/>
</dbReference>
<dbReference type="Gene3D" id="3.30.160.20">
    <property type="match status" value="2"/>
</dbReference>
<dbReference type="Gene3D" id="3.30.200.20">
    <property type="entry name" value="Phosphorylase Kinase, domain 1"/>
    <property type="match status" value="1"/>
</dbReference>
<dbReference type="Gene3D" id="1.10.510.10">
    <property type="entry name" value="Transferase(Phosphotransferase) domain 1"/>
    <property type="match status" value="1"/>
</dbReference>
<dbReference type="InterPro" id="IPR050339">
    <property type="entry name" value="CC_SR_Kinase"/>
</dbReference>
<dbReference type="InterPro" id="IPR014720">
    <property type="entry name" value="dsRBD_dom"/>
</dbReference>
<dbReference type="InterPro" id="IPR044452">
    <property type="entry name" value="EIF2AK2_DSRM_1"/>
</dbReference>
<dbReference type="InterPro" id="IPR044453">
    <property type="entry name" value="EIF2AK2_DSRM_2"/>
</dbReference>
<dbReference type="InterPro" id="IPR011009">
    <property type="entry name" value="Kinase-like_dom_sf"/>
</dbReference>
<dbReference type="InterPro" id="IPR000719">
    <property type="entry name" value="Prot_kinase_dom"/>
</dbReference>
<dbReference type="InterPro" id="IPR017441">
    <property type="entry name" value="Protein_kinase_ATP_BS"/>
</dbReference>
<dbReference type="InterPro" id="IPR008271">
    <property type="entry name" value="Ser/Thr_kinase_AS"/>
</dbReference>
<dbReference type="PANTHER" id="PTHR11042">
    <property type="entry name" value="EUKARYOTIC TRANSLATION INITIATION FACTOR 2-ALPHA KINASE EIF2-ALPHA KINASE -RELATED"/>
    <property type="match status" value="1"/>
</dbReference>
<dbReference type="PANTHER" id="PTHR11042:SF163">
    <property type="entry name" value="INTERFERON-INDUCED, DOUBLE-STRANDED RNA-ACTIVATED PROTEIN KINASE"/>
    <property type="match status" value="1"/>
</dbReference>
<dbReference type="Pfam" id="PF00035">
    <property type="entry name" value="dsrm"/>
    <property type="match status" value="2"/>
</dbReference>
<dbReference type="Pfam" id="PF00069">
    <property type="entry name" value="Pkinase"/>
    <property type="match status" value="1"/>
</dbReference>
<dbReference type="SMART" id="SM00358">
    <property type="entry name" value="DSRM"/>
    <property type="match status" value="2"/>
</dbReference>
<dbReference type="SMART" id="SM00220">
    <property type="entry name" value="S_TKc"/>
    <property type="match status" value="1"/>
</dbReference>
<dbReference type="SUPFAM" id="SSF54768">
    <property type="entry name" value="dsRNA-binding domain-like"/>
    <property type="match status" value="2"/>
</dbReference>
<dbReference type="SUPFAM" id="SSF56112">
    <property type="entry name" value="Protein kinase-like (PK-like)"/>
    <property type="match status" value="1"/>
</dbReference>
<dbReference type="PROSITE" id="PS50137">
    <property type="entry name" value="DS_RBD"/>
    <property type="match status" value="2"/>
</dbReference>
<dbReference type="PROSITE" id="PS00107">
    <property type="entry name" value="PROTEIN_KINASE_ATP"/>
    <property type="match status" value="1"/>
</dbReference>
<dbReference type="PROSITE" id="PS50011">
    <property type="entry name" value="PROTEIN_KINASE_DOM"/>
    <property type="match status" value="1"/>
</dbReference>
<dbReference type="PROSITE" id="PS00108">
    <property type="entry name" value="PROTEIN_KINASE_ST"/>
    <property type="match status" value="1"/>
</dbReference>
<reference key="1">
    <citation type="journal article" date="1994" name="Biochim. Biophys. Acta">
        <title>Cloning and characterization of a cDNA encoding rat PKR, the double-stranded RNA-dependent eukaryotic initiation factor-2 kinase.</title>
        <authorList>
            <person name="Mellor H."/>
            <person name="Flowers K.M."/>
            <person name="Kimball S.R."/>
            <person name="Jefferson L.S."/>
        </authorList>
    </citation>
    <scope>NUCLEOTIDE SEQUENCE [MRNA]</scope>
    <source>
        <strain>Sprague-Dawley</strain>
        <tissue>Brain</tissue>
    </source>
</reference>
<reference key="2">
    <citation type="journal article" date="2000" name="Nucleic Acids Res.">
        <title>A new double-stranded RNA-binding protein that interacts with PKR.</title>
        <authorList>
            <person name="Coolidge C.J."/>
            <person name="Patton J.G."/>
        </authorList>
    </citation>
    <scope>INTERACTION WITH STRBP</scope>
</reference>
<accession>Q63184</accession>
<keyword id="KW-0007">Acetylation</keyword>
<keyword id="KW-0051">Antiviral defense</keyword>
<keyword id="KW-0067">ATP-binding</keyword>
<keyword id="KW-0963">Cytoplasm</keyword>
<keyword id="KW-0391">Immunity</keyword>
<keyword id="KW-0399">Innate immunity</keyword>
<keyword id="KW-1017">Isopeptide bond</keyword>
<keyword id="KW-0418">Kinase</keyword>
<keyword id="KW-0547">Nucleotide-binding</keyword>
<keyword id="KW-0539">Nucleus</keyword>
<keyword id="KW-0597">Phosphoprotein</keyword>
<keyword id="KW-1185">Reference proteome</keyword>
<keyword id="KW-0677">Repeat</keyword>
<keyword id="KW-0694">RNA-binding</keyword>
<keyword id="KW-0723">Serine/threonine-protein kinase</keyword>
<keyword id="KW-0804">Transcription</keyword>
<keyword id="KW-0805">Transcription regulation</keyword>
<keyword id="KW-0808">Transferase</keyword>
<keyword id="KW-0829">Tyrosine-protein kinase</keyword>
<keyword id="KW-0832">Ubl conjugation</keyword>
<protein>
    <recommendedName>
        <fullName>Interferon-induced, double-stranded RNA-activated protein kinase</fullName>
        <ecNumber>2.7.11.1</ecNumber>
    </recommendedName>
    <alternativeName>
        <fullName>Eukaryotic translation initiation factor 2-alpha kinase 2</fullName>
        <shortName>eIF-2A protein kinase 2</shortName>
    </alternativeName>
    <alternativeName>
        <fullName>Interferon-inducible RNA-dependent protein kinase</fullName>
    </alternativeName>
    <alternativeName>
        <fullName>Protein kinase RNA-activated</fullName>
        <shortName>PKR</shortName>
        <shortName evidence="6">Protein kinase R</shortName>
    </alternativeName>
    <alternativeName>
        <fullName>Tyrosine-protein kinase EIF2AK2</fullName>
        <ecNumber>2.7.10.2</ecNumber>
    </alternativeName>
</protein>
<organism>
    <name type="scientific">Rattus norvegicus</name>
    <name type="common">Rat</name>
    <dbReference type="NCBI Taxonomy" id="10116"/>
    <lineage>
        <taxon>Eukaryota</taxon>
        <taxon>Metazoa</taxon>
        <taxon>Chordata</taxon>
        <taxon>Craniata</taxon>
        <taxon>Vertebrata</taxon>
        <taxon>Euteleostomi</taxon>
        <taxon>Mammalia</taxon>
        <taxon>Eutheria</taxon>
        <taxon>Euarchontoglires</taxon>
        <taxon>Glires</taxon>
        <taxon>Rodentia</taxon>
        <taxon>Myomorpha</taxon>
        <taxon>Muroidea</taxon>
        <taxon>Muridae</taxon>
        <taxon>Murinae</taxon>
        <taxon>Rattus</taxon>
    </lineage>
</organism>
<comment type="function">
    <text evidence="1 2">IFN-induced dsRNA-dependent serine/threonine-protein kinase that phosphorylates the alpha subunit of eukaryotic translation initiation factor 2 (EIF2S1/eIF-2-alpha) and plays a key role in the innate immune response to viral infection (By similarity). Inhibits viral replication via the integrated stress response (ISR): EIF2S1/eIF-2-alpha phosphorylation in response to viral infection converts EIF2S1/eIF-2-alpha in a global protein synthesis inhibitor, resulting to a shutdown of cellular and viral protein synthesis, while concomitantly initiating the preferential translation of ISR-specific mRNAs, such as the transcriptional activator ATF4 (By similarity). Exerts its antiviral activity on a wide range of DNA and RNA viruses (By similarity). Also involved in the regulation of signal transduction, apoptosis, cell proliferation and differentiation: phosphorylates other substrates including p53/TP53, PPP2R5A, DHX9, ILF3 and IRS1 (By similarity). In addition to serine/threonine-protein kinase activity, also has tyrosine-protein kinase activity and phosphorylates CDK1 at 'Tyr-4' upon DNA damage, facilitating its ubiquitination and proteasomal degradation (By similarity). Either as an adapter protein and/or via its kinase activity, can regulate various signaling pathways (p38 MAP kinase, NF-kappa-B and insulin signaling pathways) and transcription factors (JUN, STAT1, STAT3, IRF1, ATF3) involved in the expression of genes encoding pro-inflammatory cytokines and IFNs (By similarity). Activates the NF-kappa-B pathway via interaction with IKBKB and TRAF family of proteins and activates the p38 MAP kinase pathway via interaction with MAP2K6 (By similarity). Can act as both a positive and negative regulator of the insulin signaling pathway (ISP) (By similarity). Negatively regulates ISP by inducing the inhibitory phosphorylation of insulin receptor substrate 1 (IRS1) at 'Ser-312' and positively regulates ISP via phosphorylation of PPP2R5A which activates FOXO1, which in turn up-regulates the expression of insulin receptor substrate 2 (IRS2) (By similarity). Can regulate NLRP3 inflammasome assembly and the activation of NLRP3, NLRP1, AIM2 and NLRC4 inflammasomes (By similarity). Plays a role in the regulation of the cytoskeleton by binding to gelsolin (GSN), sequestering the protein in an inactive conformation away from actin (By similarity).</text>
</comment>
<comment type="catalytic activity">
    <reaction>
        <text>L-seryl-[protein] + ATP = O-phospho-L-seryl-[protein] + ADP + H(+)</text>
        <dbReference type="Rhea" id="RHEA:17989"/>
        <dbReference type="Rhea" id="RHEA-COMP:9863"/>
        <dbReference type="Rhea" id="RHEA-COMP:11604"/>
        <dbReference type="ChEBI" id="CHEBI:15378"/>
        <dbReference type="ChEBI" id="CHEBI:29999"/>
        <dbReference type="ChEBI" id="CHEBI:30616"/>
        <dbReference type="ChEBI" id="CHEBI:83421"/>
        <dbReference type="ChEBI" id="CHEBI:456216"/>
        <dbReference type="EC" id="2.7.11.1"/>
    </reaction>
</comment>
<comment type="catalytic activity">
    <reaction>
        <text>L-threonyl-[protein] + ATP = O-phospho-L-threonyl-[protein] + ADP + H(+)</text>
        <dbReference type="Rhea" id="RHEA:46608"/>
        <dbReference type="Rhea" id="RHEA-COMP:11060"/>
        <dbReference type="Rhea" id="RHEA-COMP:11605"/>
        <dbReference type="ChEBI" id="CHEBI:15378"/>
        <dbReference type="ChEBI" id="CHEBI:30013"/>
        <dbReference type="ChEBI" id="CHEBI:30616"/>
        <dbReference type="ChEBI" id="CHEBI:61977"/>
        <dbReference type="ChEBI" id="CHEBI:456216"/>
        <dbReference type="EC" id="2.7.11.1"/>
    </reaction>
</comment>
<comment type="catalytic activity">
    <reaction evidence="5">
        <text>L-tyrosyl-[protein] + ATP = O-phospho-L-tyrosyl-[protein] + ADP + H(+)</text>
        <dbReference type="Rhea" id="RHEA:10596"/>
        <dbReference type="Rhea" id="RHEA-COMP:10136"/>
        <dbReference type="Rhea" id="RHEA-COMP:20101"/>
        <dbReference type="ChEBI" id="CHEBI:15378"/>
        <dbReference type="ChEBI" id="CHEBI:30616"/>
        <dbReference type="ChEBI" id="CHEBI:46858"/>
        <dbReference type="ChEBI" id="CHEBI:61978"/>
        <dbReference type="ChEBI" id="CHEBI:456216"/>
        <dbReference type="EC" id="2.7.10.2"/>
    </reaction>
</comment>
<comment type="activity regulation">
    <text evidence="1">Initially produced in an inactive form and is activated by binding to viral dsRNA, which causes dimerization and autophosphorylation in the activation loop and stimulation of function. ISGylation can activate it in the absence of viral infection. Can also be activated by heparin, pro-inflammatory stimuli, growth factors, cytokines, oxidative stress and the cellular protein PRKRA. Activity is markedly stimulated by manganese ions. Activation is blocked by the cellular proteins TARBP2, DUS2L, NPM1, NCK1 and ADAR (By similarity).</text>
</comment>
<comment type="subunit">
    <text evidence="1 2">Homodimer (By similarity). Interacts with DNAJC3 (By similarity). Interacts with STRBP. Forms a complex with FANCA, FANCC, FANCG and HSP70 (By similarity). Interacts with ADAR/ADAR1 (By similarity). The inactive form interacts with NCK1 and GSN. Interacts (via the kinase catalytic domain) with STAT3 (via SH2 domain), TRAF2 (C-terminus), TRAF5 (C-terminus) and TRAF6 (C-terminus). Interacts with MAP2K6, IKBKB/IKKB, IRS1, NPM1, TARBP2, NLRP1, NLRP3, NLRC4 and AIM2. Interacts (via DRBM 1 domain) with DUS2L (via DRBM domain). Interacts with DHX9 (via N-terminus) and this interaction is dependent upon activation of the kinase (By similarity).</text>
</comment>
<comment type="subcellular location">
    <subcellularLocation>
        <location evidence="1">Cytoplasm</location>
    </subcellularLocation>
    <subcellularLocation>
        <location evidence="1">Nucleus</location>
    </subcellularLocation>
    <subcellularLocation>
        <location evidence="1">Cytoplasm</location>
        <location evidence="1">Perinuclear region</location>
    </subcellularLocation>
</comment>
<comment type="PTM">
    <text evidence="1">Autophosphorylated on several Ser, Thr and Tyr residues. Autophosphorylation of Thr-411 is dependent on Thr-406 and is stimulated by dsRNA binding and dimerization. Autophosphorylation apparently leads to the activation of the kinase. Tyrosine autophosphorylation is essential for efficient dsRNA-binding, dimerization, and kinase activation (By similarity).</text>
</comment>
<comment type="similarity">
    <text evidence="3">Belongs to the protein kinase superfamily. Ser/Thr protein kinase family. GCN2 subfamily.</text>
</comment>
<feature type="initiator methionine" description="Removed" evidence="1">
    <location>
        <position position="1"/>
    </location>
</feature>
<feature type="chain" id="PRO_0000274915" description="Interferon-induced, double-stranded RNA-activated protein kinase">
    <location>
        <begin position="2"/>
        <end position="513"/>
    </location>
</feature>
<feature type="domain" description="DRBM 1" evidence="4">
    <location>
        <begin position="8"/>
        <end position="76"/>
    </location>
</feature>
<feature type="domain" description="DRBM 2" evidence="4">
    <location>
        <begin position="95"/>
        <end position="162"/>
    </location>
</feature>
<feature type="domain" description="Protein kinase" evidence="3">
    <location>
        <begin position="236"/>
        <end position="502"/>
    </location>
</feature>
<feature type="region of interest" description="Interaction with TRAF5" evidence="1">
    <location>
        <begin position="235"/>
        <end position="513"/>
    </location>
</feature>
<feature type="active site" description="Proton acceptor" evidence="3 5">
    <location>
        <position position="373"/>
    </location>
</feature>
<feature type="binding site" evidence="3">
    <location>
        <begin position="242"/>
        <end position="250"/>
    </location>
    <ligand>
        <name>ATP</name>
        <dbReference type="ChEBI" id="CHEBI:30616"/>
    </ligand>
</feature>
<feature type="binding site" evidence="3">
    <location>
        <position position="265"/>
    </location>
    <ligand>
        <name>ATP</name>
        <dbReference type="ChEBI" id="CHEBI:30616"/>
    </ligand>
</feature>
<feature type="modified residue" description="N-acetylalanine" evidence="1">
    <location>
        <position position="2"/>
    </location>
</feature>
<feature type="modified residue" description="Phosphoserine" evidence="1">
    <location>
        <position position="82"/>
    </location>
</feature>
<feature type="modified residue" description="Phosphothreonine" evidence="1">
    <location>
        <position position="84"/>
    </location>
</feature>
<feature type="modified residue" description="Phosphotyrosine; by autocatalysis" evidence="1">
    <location>
        <position position="96"/>
    </location>
</feature>
<feature type="modified residue" description="Phosphotyrosine; by autocatalysis" evidence="1">
    <location>
        <position position="157"/>
    </location>
</feature>
<feature type="modified residue" description="Phosphothreonine" evidence="1">
    <location>
        <position position="227"/>
    </location>
</feature>
<feature type="modified residue" description="Phosphotyrosine; by autocatalysis" evidence="1">
    <location>
        <position position="262"/>
    </location>
</feature>
<feature type="modified residue" description="Phosphothreonine; by autocatalysis" evidence="1">
    <location>
        <position position="406"/>
    </location>
</feature>
<feature type="modified residue" description="Phosphothreonine; by autocatalysis" evidence="1">
    <location>
        <position position="411"/>
    </location>
</feature>
<feature type="modified residue" description="Phosphoserine" evidence="1">
    <location>
        <position position="416"/>
    </location>
</feature>
<feature type="cross-link" description="Glycyl lysine isopeptide (Lys-Gly) (interchain with G-Cter in ISG15)" evidence="1">
    <location>
        <position position="68"/>
    </location>
</feature>
<feature type="cross-link" description="Glycyl lysine isopeptide (Lys-Gly) (interchain with G-Cter in ISG15)" evidence="1">
    <location>
        <position position="154"/>
    </location>
</feature>
<evidence type="ECO:0000250" key="1">
    <source>
        <dbReference type="UniProtKB" id="P19525"/>
    </source>
</evidence>
<evidence type="ECO:0000250" key="2">
    <source>
        <dbReference type="UniProtKB" id="Q03963"/>
    </source>
</evidence>
<evidence type="ECO:0000255" key="3">
    <source>
        <dbReference type="PROSITE-ProRule" id="PRU00159"/>
    </source>
</evidence>
<evidence type="ECO:0000255" key="4">
    <source>
        <dbReference type="PROSITE-ProRule" id="PRU00266"/>
    </source>
</evidence>
<evidence type="ECO:0000255" key="5">
    <source>
        <dbReference type="PROSITE-ProRule" id="PRU10027"/>
    </source>
</evidence>
<evidence type="ECO:0000305" key="6"/>
<name>E2AK2_RAT</name>
<proteinExistence type="evidence at protein level"/>